<accession>Q0U0H7</accession>
<evidence type="ECO:0000255" key="1">
    <source>
        <dbReference type="HAMAP-Rule" id="MF_03013"/>
    </source>
</evidence>
<evidence type="ECO:0000255" key="2">
    <source>
        <dbReference type="PROSITE-ProRule" id="PRU01167"/>
    </source>
</evidence>
<evidence type="ECO:0000256" key="3">
    <source>
        <dbReference type="SAM" id="MobiDB-lite"/>
    </source>
</evidence>
<organism>
    <name type="scientific">Phaeosphaeria nodorum (strain SN15 / ATCC MYA-4574 / FGSC 10173)</name>
    <name type="common">Glume blotch fungus</name>
    <name type="synonym">Parastagonospora nodorum</name>
    <dbReference type="NCBI Taxonomy" id="321614"/>
    <lineage>
        <taxon>Eukaryota</taxon>
        <taxon>Fungi</taxon>
        <taxon>Dikarya</taxon>
        <taxon>Ascomycota</taxon>
        <taxon>Pezizomycotina</taxon>
        <taxon>Dothideomycetes</taxon>
        <taxon>Pleosporomycetidae</taxon>
        <taxon>Pleosporales</taxon>
        <taxon>Pleosporineae</taxon>
        <taxon>Phaeosphaeriaceae</taxon>
        <taxon>Parastagonospora</taxon>
    </lineage>
</organism>
<comment type="function">
    <text evidence="1">mRNA-binding protein involved in proper cytoplasmic distribution of mitochondria.</text>
</comment>
<comment type="subunit">
    <text evidence="1">May associate with the eukaryotic translation initiation factor 3 (eIF-3) complex.</text>
</comment>
<comment type="subcellular location">
    <subcellularLocation>
        <location evidence="1">Cytoplasm</location>
    </subcellularLocation>
</comment>
<comment type="similarity">
    <text evidence="1">Belongs to the CLU family.</text>
</comment>
<gene>
    <name evidence="1" type="primary">CLU1</name>
    <name evidence="1" type="synonym">TIF31</name>
    <name type="ORF">SNOG_14691</name>
</gene>
<sequence>MAASSNDASKSAMANSNVTTEVAQTPSKEQDVNGEVEATEEDGANGQLPDNIFQIKIKLPHEPFEIPMTISTAEQVQDLRQSIIEMPNTFQYSCFHLEHKGQRINDFVDLSEVPELGPDSVLEVKEDPYNEKEARLHVIRVRELIGAAGDRTDALHGIMAGLSLHDTVGLDQSGKPKEDGPEQSPLADYDFKSSGAIKNLLPPPQEPAPKCIKSIALSAWNPPPYHLRTKGHLLYLVAMTNENEQHHITSHVTGFYVNKSSNASFDPAPRQGPKALHAHSLLTLLEKLSPSFEASFQQLLEHNAKKELLTIFQLSNAIPANPWLVPPPTSSLTTHQPDLARTQESYLISGVENTDTLRDWNEEFQSTREMPKEAVHDRVFRERLTSKLFADYNDAATRGAMLVARGEIAPLNPTEAKDAQIFVYNNIFYSFGADGVGTFGTEGGDEAARVAVGKDVIGVRAVNNLDIPNLFTSGTVVVDFLGKRIVGQSIVPGIFKQRDPGEHQIDYGAVEGKEIVADDKSFVPLFEQLSKALRVKKHPVWDKDNVRHELEGSVETKGLIGTDGRRYALDLYRLTPLDVAWIEAHWSEPSKDEDAKPSEKNYPHRMATLRPELVESYGRLKLREYVKNEIDKKANKARGGRRRLPKAQKKADAGKEVDGEKKAEAEPEQDRVDISGFSFALNPDVFSGQTPQSDEDKAEWAKDEAEVRAACDHLQTEVIPRMITELKDGEVGFPMDGQSLSSLLHKRGVNIRYLGKIAELSDKPDPRLQALKRLIVQEMIARGFKHFANSKLRNVSAPFSAACVAHLLNCLLGADANAKPVAECDEEIKRMISTPEDDFSFEKLTPESLKKEVIAQIALRYRYDLGESWVESGKELQLLREVSLKLGLQLQTRQYGFTKETLTNGAAVPTPAAPQTNGSSTSSKKKKNKTITPPRADSPAVSLPSQTFHADDILNIVPVIKEASPKSLLAEEALEAGRMSVAQDQKELGQELLLESLQLHEQIYGVLHPEVARAYHTLSNLLFNLDDKASALELAHKAVIVSERTLGVDHADTVLAYLNLGLFEHASGNTKAALVYVRHALELWKIIYGADHPDSITTLNNAAVMLQAMKQYHESRIWFEASLAICEDVSGKTSINTATLLFQTAQALALDKDMRGAVNRMRESYNIFKDVLGAEDRNTKEAESWLEQLTQSAVSQAKQLNDLAKGRIRRIQLTGRNPLRPAAATPSVSDAAAAAGGQRTGTGRVDQRKIEDLLKYIEGESSKTPTKKRTQNPRKRTQKP</sequence>
<proteinExistence type="inferred from homology"/>
<keyword id="KW-0963">Cytoplasm</keyword>
<protein>
    <recommendedName>
        <fullName evidence="1">Clustered mitochondria protein homolog</fullName>
    </recommendedName>
    <alternativeName>
        <fullName evidence="1">Protein TIF31 homolog</fullName>
    </alternativeName>
</protein>
<name>CLU_PHANO</name>
<feature type="chain" id="PRO_0000366411" description="Clustered mitochondria protein homolog">
    <location>
        <begin position="1"/>
        <end position="1280"/>
    </location>
</feature>
<feature type="domain" description="Clu" evidence="2">
    <location>
        <begin position="338"/>
        <end position="582"/>
    </location>
</feature>
<feature type="region of interest" description="Disordered" evidence="3">
    <location>
        <begin position="1"/>
        <end position="49"/>
    </location>
</feature>
<feature type="region of interest" description="Disordered" evidence="3">
    <location>
        <begin position="169"/>
        <end position="189"/>
    </location>
</feature>
<feature type="region of interest" description="Disordered" evidence="3">
    <location>
        <begin position="633"/>
        <end position="669"/>
    </location>
</feature>
<feature type="region of interest" description="Disordered" evidence="3">
    <location>
        <begin position="905"/>
        <end position="943"/>
    </location>
</feature>
<feature type="region of interest" description="Disordered" evidence="3">
    <location>
        <begin position="1214"/>
        <end position="1280"/>
    </location>
</feature>
<feature type="compositionally biased region" description="Polar residues" evidence="3">
    <location>
        <begin position="1"/>
        <end position="27"/>
    </location>
</feature>
<feature type="compositionally biased region" description="Acidic residues" evidence="3">
    <location>
        <begin position="32"/>
        <end position="43"/>
    </location>
</feature>
<feature type="compositionally biased region" description="Basic residues" evidence="3">
    <location>
        <begin position="635"/>
        <end position="648"/>
    </location>
</feature>
<feature type="compositionally biased region" description="Basic and acidic residues" evidence="3">
    <location>
        <begin position="649"/>
        <end position="669"/>
    </location>
</feature>
<feature type="compositionally biased region" description="Low complexity" evidence="3">
    <location>
        <begin position="1221"/>
        <end position="1235"/>
    </location>
</feature>
<feature type="compositionally biased region" description="Basic and acidic residues" evidence="3">
    <location>
        <begin position="1245"/>
        <end position="1261"/>
    </location>
</feature>
<feature type="compositionally biased region" description="Basic residues" evidence="3">
    <location>
        <begin position="1265"/>
        <end position="1280"/>
    </location>
</feature>
<reference key="1">
    <citation type="journal article" date="2007" name="Plant Cell">
        <title>Dothideomycete-plant interactions illuminated by genome sequencing and EST analysis of the wheat pathogen Stagonospora nodorum.</title>
        <authorList>
            <person name="Hane J.K."/>
            <person name="Lowe R.G.T."/>
            <person name="Solomon P.S."/>
            <person name="Tan K.-C."/>
            <person name="Schoch C.L."/>
            <person name="Spatafora J.W."/>
            <person name="Crous P.W."/>
            <person name="Kodira C.D."/>
            <person name="Birren B.W."/>
            <person name="Galagan J.E."/>
            <person name="Torriani S.F.F."/>
            <person name="McDonald B.A."/>
            <person name="Oliver R.P."/>
        </authorList>
    </citation>
    <scope>NUCLEOTIDE SEQUENCE [LARGE SCALE GENOMIC DNA]</scope>
    <source>
        <strain>SN15 / ATCC MYA-4574 / FGSC 10173</strain>
    </source>
</reference>
<dbReference type="EMBL" id="CH445357">
    <property type="protein sequence ID" value="EAT77883.2"/>
    <property type="molecule type" value="Genomic_DNA"/>
</dbReference>
<dbReference type="RefSeq" id="XP_001804874.1">
    <property type="nucleotide sequence ID" value="XM_001804822.1"/>
</dbReference>
<dbReference type="SMR" id="Q0U0H7"/>
<dbReference type="FunCoup" id="Q0U0H7">
    <property type="interactions" value="909"/>
</dbReference>
<dbReference type="STRING" id="321614.Q0U0H7"/>
<dbReference type="EnsemblFungi" id="SNOT_14691">
    <property type="protein sequence ID" value="SNOT_14691"/>
    <property type="gene ID" value="SNOG_14691"/>
</dbReference>
<dbReference type="GeneID" id="5981800"/>
<dbReference type="KEGG" id="pno:SNOG_14691"/>
<dbReference type="VEuPathDB" id="FungiDB:JI435_146910"/>
<dbReference type="eggNOG" id="KOG1839">
    <property type="taxonomic scope" value="Eukaryota"/>
</dbReference>
<dbReference type="HOGENOM" id="CLU_003256_2_0_1"/>
<dbReference type="InParanoid" id="Q0U0H7"/>
<dbReference type="Proteomes" id="UP000001055">
    <property type="component" value="Unassembled WGS sequence"/>
</dbReference>
<dbReference type="GO" id="GO:0005737">
    <property type="term" value="C:cytoplasm"/>
    <property type="evidence" value="ECO:0000318"/>
    <property type="project" value="GO_Central"/>
</dbReference>
<dbReference type="GO" id="GO:0003729">
    <property type="term" value="F:mRNA binding"/>
    <property type="evidence" value="ECO:0000318"/>
    <property type="project" value="GO_Central"/>
</dbReference>
<dbReference type="GO" id="GO:0048312">
    <property type="term" value="P:intracellular distribution of mitochondria"/>
    <property type="evidence" value="ECO:0000318"/>
    <property type="project" value="GO_Central"/>
</dbReference>
<dbReference type="GO" id="GO:0007005">
    <property type="term" value="P:mitochondrion organization"/>
    <property type="evidence" value="ECO:0007669"/>
    <property type="project" value="UniProtKB-UniRule"/>
</dbReference>
<dbReference type="CDD" id="cd15466">
    <property type="entry name" value="CLU-central"/>
    <property type="match status" value="1"/>
</dbReference>
<dbReference type="FunFam" id="1.25.40.10:FF:000293">
    <property type="entry name" value="Clustered mitochondria protein homolog"/>
    <property type="match status" value="1"/>
</dbReference>
<dbReference type="Gene3D" id="1.25.40.10">
    <property type="entry name" value="Tetratricopeptide repeat domain"/>
    <property type="match status" value="2"/>
</dbReference>
<dbReference type="HAMAP" id="MF_03013">
    <property type="entry name" value="CLU"/>
    <property type="match status" value="1"/>
</dbReference>
<dbReference type="InterPro" id="IPR033646">
    <property type="entry name" value="CLU-central"/>
</dbReference>
<dbReference type="InterPro" id="IPR025697">
    <property type="entry name" value="CLU_dom"/>
</dbReference>
<dbReference type="InterPro" id="IPR028275">
    <property type="entry name" value="CLU_N"/>
</dbReference>
<dbReference type="InterPro" id="IPR027523">
    <property type="entry name" value="CLU_prot"/>
</dbReference>
<dbReference type="InterPro" id="IPR023231">
    <property type="entry name" value="GSKIP_dom_sf"/>
</dbReference>
<dbReference type="InterPro" id="IPR011990">
    <property type="entry name" value="TPR-like_helical_dom_sf"/>
</dbReference>
<dbReference type="InterPro" id="IPR019734">
    <property type="entry name" value="TPR_rpt"/>
</dbReference>
<dbReference type="PANTHER" id="PTHR12601:SF6">
    <property type="entry name" value="CLUSTERED MITOCHONDRIA PROTEIN HOMOLOG"/>
    <property type="match status" value="1"/>
</dbReference>
<dbReference type="PANTHER" id="PTHR12601">
    <property type="entry name" value="EUKARYOTIC TRANSLATION INITIATION FACTOR 3 SUBUNIT EIF-3"/>
    <property type="match status" value="1"/>
</dbReference>
<dbReference type="Pfam" id="PF13236">
    <property type="entry name" value="CLU"/>
    <property type="match status" value="1"/>
</dbReference>
<dbReference type="Pfam" id="PF15044">
    <property type="entry name" value="CLU_N"/>
    <property type="match status" value="1"/>
</dbReference>
<dbReference type="Pfam" id="PF12807">
    <property type="entry name" value="eIF3_p135"/>
    <property type="match status" value="1"/>
</dbReference>
<dbReference type="Pfam" id="PF13374">
    <property type="entry name" value="TPR_10"/>
    <property type="match status" value="2"/>
</dbReference>
<dbReference type="Pfam" id="PF13424">
    <property type="entry name" value="TPR_12"/>
    <property type="match status" value="1"/>
</dbReference>
<dbReference type="SMART" id="SM00028">
    <property type="entry name" value="TPR"/>
    <property type="match status" value="3"/>
</dbReference>
<dbReference type="SUPFAM" id="SSF103107">
    <property type="entry name" value="Hypothetical protein c14orf129, hspc210"/>
    <property type="match status" value="1"/>
</dbReference>
<dbReference type="SUPFAM" id="SSF48452">
    <property type="entry name" value="TPR-like"/>
    <property type="match status" value="2"/>
</dbReference>
<dbReference type="PROSITE" id="PS51823">
    <property type="entry name" value="CLU"/>
    <property type="match status" value="1"/>
</dbReference>